<feature type="chain" id="PRO_0000259020" description="RNase adapter protein RapZ">
    <location>
        <begin position="1"/>
        <end position="284"/>
    </location>
</feature>
<feature type="region of interest" description="RNA-binding" evidence="1">
    <location>
        <begin position="266"/>
        <end position="284"/>
    </location>
</feature>
<feature type="binding site" evidence="1">
    <location>
        <begin position="8"/>
        <end position="15"/>
    </location>
    <ligand>
        <name>ATP</name>
        <dbReference type="ChEBI" id="CHEBI:30616"/>
    </ligand>
</feature>
<feature type="binding site" evidence="1">
    <location>
        <begin position="56"/>
        <end position="59"/>
    </location>
    <ligand>
        <name>GTP</name>
        <dbReference type="ChEBI" id="CHEBI:37565"/>
    </ligand>
</feature>
<comment type="function">
    <text evidence="1">Modulates the synthesis of GlmS, by affecting the processing and stability of the regulatory small RNA GlmZ. When glucosamine-6-phosphate (GlcN6P) concentrations are high in the cell, RapZ binds GlmZ and targets it to cleavage by RNase E. Consequently, GlmZ is inactivated and unable to activate GlmS synthesis. Under low GlcN6P concentrations, RapZ is sequestered and inactivated by an other regulatory small RNA, GlmY, preventing GlmZ degradation and leading to synthesis of GlmS.</text>
</comment>
<comment type="subunit">
    <text evidence="1">Homotrimer.</text>
</comment>
<comment type="similarity">
    <text evidence="1">Belongs to the RapZ-like family. RapZ subfamily.</text>
</comment>
<proteinExistence type="inferred from homology"/>
<keyword id="KW-0067">ATP-binding</keyword>
<keyword id="KW-0342">GTP-binding</keyword>
<keyword id="KW-0547">Nucleotide-binding</keyword>
<keyword id="KW-0694">RNA-binding</keyword>
<evidence type="ECO:0000255" key="1">
    <source>
        <dbReference type="HAMAP-Rule" id="MF_00636"/>
    </source>
</evidence>
<organism>
    <name type="scientific">Yersinia pestis bv. Antiqua (strain Nepal516)</name>
    <dbReference type="NCBI Taxonomy" id="377628"/>
    <lineage>
        <taxon>Bacteria</taxon>
        <taxon>Pseudomonadati</taxon>
        <taxon>Pseudomonadota</taxon>
        <taxon>Gammaproteobacteria</taxon>
        <taxon>Enterobacterales</taxon>
        <taxon>Yersiniaceae</taxon>
        <taxon>Yersinia</taxon>
    </lineage>
</organism>
<reference key="1">
    <citation type="journal article" date="2006" name="J. Bacteriol.">
        <title>Complete genome sequence of Yersinia pestis strains Antiqua and Nepal516: evidence of gene reduction in an emerging pathogen.</title>
        <authorList>
            <person name="Chain P.S.G."/>
            <person name="Hu P."/>
            <person name="Malfatti S.A."/>
            <person name="Radnedge L."/>
            <person name="Larimer F."/>
            <person name="Vergez L.M."/>
            <person name="Worsham P."/>
            <person name="Chu M.C."/>
            <person name="Andersen G.L."/>
        </authorList>
    </citation>
    <scope>NUCLEOTIDE SEQUENCE [LARGE SCALE GENOMIC DNA]</scope>
    <source>
        <strain>Nepal516</strain>
    </source>
</reference>
<reference key="2">
    <citation type="submission" date="2009-04" db="EMBL/GenBank/DDBJ databases">
        <title>Yersinia pestis Nepal516A whole genome shotgun sequencing project.</title>
        <authorList>
            <person name="Plunkett G. III"/>
            <person name="Anderson B.D."/>
            <person name="Baumler D.J."/>
            <person name="Burland V."/>
            <person name="Cabot E.L."/>
            <person name="Glasner J.D."/>
            <person name="Mau B."/>
            <person name="Neeno-Eckwall E."/>
            <person name="Perna N.T."/>
            <person name="Munk A.C."/>
            <person name="Tapia R."/>
            <person name="Green L.D."/>
            <person name="Rogers Y.C."/>
            <person name="Detter J.C."/>
            <person name="Bruce D.C."/>
            <person name="Brettin T.S."/>
        </authorList>
    </citation>
    <scope>NUCLEOTIDE SEQUENCE [LARGE SCALE GENOMIC DNA]</scope>
    <source>
        <strain>Nepal516</strain>
    </source>
</reference>
<gene>
    <name evidence="1" type="primary">rapZ</name>
    <name type="ordered locus">YPN_3468</name>
    <name type="ORF">YP516_3941</name>
</gene>
<accession>Q1CDY5</accession>
<accession>D1Q1E2</accession>
<dbReference type="EMBL" id="CP000305">
    <property type="protein sequence ID" value="ABG19795.1"/>
    <property type="molecule type" value="Genomic_DNA"/>
</dbReference>
<dbReference type="EMBL" id="ACNQ01000019">
    <property type="protein sequence ID" value="EEO74345.1"/>
    <property type="molecule type" value="Genomic_DNA"/>
</dbReference>
<dbReference type="RefSeq" id="WP_002210113.1">
    <property type="nucleotide sequence ID" value="NZ_ACNQ01000019.1"/>
</dbReference>
<dbReference type="SMR" id="Q1CDY5"/>
<dbReference type="GeneID" id="96663019"/>
<dbReference type="KEGG" id="ypn:YPN_3468"/>
<dbReference type="HOGENOM" id="CLU_059558_1_1_6"/>
<dbReference type="Proteomes" id="UP000008936">
    <property type="component" value="Chromosome"/>
</dbReference>
<dbReference type="GO" id="GO:0005524">
    <property type="term" value="F:ATP binding"/>
    <property type="evidence" value="ECO:0007669"/>
    <property type="project" value="UniProtKB-UniRule"/>
</dbReference>
<dbReference type="GO" id="GO:0005525">
    <property type="term" value="F:GTP binding"/>
    <property type="evidence" value="ECO:0007669"/>
    <property type="project" value="UniProtKB-UniRule"/>
</dbReference>
<dbReference type="GO" id="GO:0003723">
    <property type="term" value="F:RNA binding"/>
    <property type="evidence" value="ECO:0007669"/>
    <property type="project" value="UniProtKB-KW"/>
</dbReference>
<dbReference type="HAMAP" id="MF_00636">
    <property type="entry name" value="RapZ_like"/>
    <property type="match status" value="1"/>
</dbReference>
<dbReference type="InterPro" id="IPR027417">
    <property type="entry name" value="P-loop_NTPase"/>
</dbReference>
<dbReference type="InterPro" id="IPR005337">
    <property type="entry name" value="RapZ-like"/>
</dbReference>
<dbReference type="InterPro" id="IPR053930">
    <property type="entry name" value="RapZ-like_N"/>
</dbReference>
<dbReference type="InterPro" id="IPR053931">
    <property type="entry name" value="RapZ_C"/>
</dbReference>
<dbReference type="NCBIfam" id="NF003828">
    <property type="entry name" value="PRK05416.1"/>
    <property type="match status" value="1"/>
</dbReference>
<dbReference type="PANTHER" id="PTHR30448">
    <property type="entry name" value="RNASE ADAPTER PROTEIN RAPZ"/>
    <property type="match status" value="1"/>
</dbReference>
<dbReference type="PANTHER" id="PTHR30448:SF0">
    <property type="entry name" value="RNASE ADAPTER PROTEIN RAPZ"/>
    <property type="match status" value="1"/>
</dbReference>
<dbReference type="Pfam" id="PF22740">
    <property type="entry name" value="PapZ_C"/>
    <property type="match status" value="1"/>
</dbReference>
<dbReference type="Pfam" id="PF03668">
    <property type="entry name" value="RapZ-like_N"/>
    <property type="match status" value="1"/>
</dbReference>
<dbReference type="PIRSF" id="PIRSF005052">
    <property type="entry name" value="P-loopkin"/>
    <property type="match status" value="1"/>
</dbReference>
<dbReference type="SUPFAM" id="SSF52540">
    <property type="entry name" value="P-loop containing nucleoside triphosphate hydrolases"/>
    <property type="match status" value="1"/>
</dbReference>
<sequence>MVLMIVSGRSGSGKSVALRALEDMGFYCVDNLPVVLLPQLASTLADRNISAAVSIDVRNMPESPEVFEHAMTQLPDSFSPQLLFLDADRNTLIRRYSDTRRLHPLSAKNLSLESAIDEESDLLEPLRSRADLIIDTSEMSVHELAEMLRTRLLGKRERELTMVFESFGFKHGIPIDADYVFDVRFLPNPHWDPKLRPMTGLDKPVISFLDRHTEVHNFIYQTRSYLEQWLPMLETNNRSYLTVAIGCTGGKHRSVYVAEQLADYFRARGKNVQSRHRTLEKRKQ</sequence>
<name>RAPZ_YERPN</name>
<protein>
    <recommendedName>
        <fullName evidence="1">RNase adapter protein RapZ</fullName>
    </recommendedName>
</protein>